<sequence length="237" mass="25566">MDKKKRILVKFSGEALAGDSGFGIDSTILKFIANEIKSLVDMGVEVGIVIGGGNIIRGVSAAAGGIIKRTSGDHMGMLATVINAIAMREALEFYDVDVRVQSAIKMEAICETFIIGRAKRHLEKGRVVIFAAGTGNPFFTTDTAATLRAIEIESDMIIKATKVNGVYDKDPNKFEEAVLLNSLTYDEALKDNIKVMDDTAIALAKDNHLPIVVCNMFKSGNLCKIADDDLSFCSIVK</sequence>
<accession>A7I2U3</accession>
<reference key="1">
    <citation type="submission" date="2007-07" db="EMBL/GenBank/DDBJ databases">
        <title>Complete genome sequence of Campylobacter hominis ATCC BAA-381, a commensal isolated from the human gastrointestinal tract.</title>
        <authorList>
            <person name="Fouts D.E."/>
            <person name="Mongodin E.F."/>
            <person name="Puiu D."/>
            <person name="Sebastian Y."/>
            <person name="Miller W.G."/>
            <person name="Mandrell R.E."/>
            <person name="Nelson K.E."/>
        </authorList>
    </citation>
    <scope>NUCLEOTIDE SEQUENCE [LARGE SCALE GENOMIC DNA]</scope>
    <source>
        <strain>ATCC BAA-381 / DSM 21671 / CCUG 45161 / LMG 19568 / NCTC 13146 / CH001A</strain>
    </source>
</reference>
<evidence type="ECO:0000255" key="1">
    <source>
        <dbReference type="HAMAP-Rule" id="MF_01220"/>
    </source>
</evidence>
<gene>
    <name evidence="1" type="primary">pyrH</name>
    <name type="ordered locus">CHAB381_1283</name>
</gene>
<comment type="function">
    <text evidence="1">Catalyzes the reversible phosphorylation of UMP to UDP.</text>
</comment>
<comment type="catalytic activity">
    <reaction evidence="1">
        <text>UMP + ATP = UDP + ADP</text>
        <dbReference type="Rhea" id="RHEA:24400"/>
        <dbReference type="ChEBI" id="CHEBI:30616"/>
        <dbReference type="ChEBI" id="CHEBI:57865"/>
        <dbReference type="ChEBI" id="CHEBI:58223"/>
        <dbReference type="ChEBI" id="CHEBI:456216"/>
        <dbReference type="EC" id="2.7.4.22"/>
    </reaction>
</comment>
<comment type="activity regulation">
    <text evidence="1">Allosterically activated by GTP. Inhibited by UTP.</text>
</comment>
<comment type="pathway">
    <text evidence="1">Pyrimidine metabolism; CTP biosynthesis via de novo pathway; UDP from UMP (UMPK route): step 1/1.</text>
</comment>
<comment type="subunit">
    <text evidence="1">Homohexamer.</text>
</comment>
<comment type="subcellular location">
    <subcellularLocation>
        <location evidence="1">Cytoplasm</location>
    </subcellularLocation>
</comment>
<comment type="similarity">
    <text evidence="1">Belongs to the UMP kinase family.</text>
</comment>
<protein>
    <recommendedName>
        <fullName evidence="1">Uridylate kinase</fullName>
        <shortName evidence="1">UK</shortName>
        <ecNumber evidence="1">2.7.4.22</ecNumber>
    </recommendedName>
    <alternativeName>
        <fullName evidence="1">Uridine monophosphate kinase</fullName>
        <shortName evidence="1">UMP kinase</shortName>
        <shortName evidence="1">UMPK</shortName>
    </alternativeName>
</protein>
<feature type="chain" id="PRO_1000053900" description="Uridylate kinase">
    <location>
        <begin position="1"/>
        <end position="237"/>
    </location>
</feature>
<feature type="region of interest" description="Involved in allosteric activation by GTP" evidence="1">
    <location>
        <begin position="18"/>
        <end position="23"/>
    </location>
</feature>
<feature type="binding site" evidence="1">
    <location>
        <begin position="10"/>
        <end position="13"/>
    </location>
    <ligand>
        <name>ATP</name>
        <dbReference type="ChEBI" id="CHEBI:30616"/>
    </ligand>
</feature>
<feature type="binding site" evidence="1">
    <location>
        <position position="52"/>
    </location>
    <ligand>
        <name>UMP</name>
        <dbReference type="ChEBI" id="CHEBI:57865"/>
    </ligand>
</feature>
<feature type="binding site" evidence="1">
    <location>
        <position position="53"/>
    </location>
    <ligand>
        <name>ATP</name>
        <dbReference type="ChEBI" id="CHEBI:30616"/>
    </ligand>
</feature>
<feature type="binding site" evidence="1">
    <location>
        <position position="57"/>
    </location>
    <ligand>
        <name>ATP</name>
        <dbReference type="ChEBI" id="CHEBI:30616"/>
    </ligand>
</feature>
<feature type="binding site" evidence="1">
    <location>
        <position position="73"/>
    </location>
    <ligand>
        <name>UMP</name>
        <dbReference type="ChEBI" id="CHEBI:57865"/>
    </ligand>
</feature>
<feature type="binding site" evidence="1">
    <location>
        <begin position="134"/>
        <end position="141"/>
    </location>
    <ligand>
        <name>UMP</name>
        <dbReference type="ChEBI" id="CHEBI:57865"/>
    </ligand>
</feature>
<feature type="binding site" evidence="1">
    <location>
        <position position="161"/>
    </location>
    <ligand>
        <name>ATP</name>
        <dbReference type="ChEBI" id="CHEBI:30616"/>
    </ligand>
</feature>
<feature type="binding site" evidence="1">
    <location>
        <position position="167"/>
    </location>
    <ligand>
        <name>ATP</name>
        <dbReference type="ChEBI" id="CHEBI:30616"/>
    </ligand>
</feature>
<feature type="binding site" evidence="1">
    <location>
        <position position="170"/>
    </location>
    <ligand>
        <name>ATP</name>
        <dbReference type="ChEBI" id="CHEBI:30616"/>
    </ligand>
</feature>
<proteinExistence type="inferred from homology"/>
<name>PYRH_CAMHC</name>
<dbReference type="EC" id="2.7.4.22" evidence="1"/>
<dbReference type="EMBL" id="CP000776">
    <property type="protein sequence ID" value="ABS52450.1"/>
    <property type="molecule type" value="Genomic_DNA"/>
</dbReference>
<dbReference type="RefSeq" id="WP_012109135.1">
    <property type="nucleotide sequence ID" value="NC_009714.1"/>
</dbReference>
<dbReference type="SMR" id="A7I2U3"/>
<dbReference type="STRING" id="360107.CHAB381_1283"/>
<dbReference type="KEGG" id="cha:CHAB381_1283"/>
<dbReference type="eggNOG" id="COG0528">
    <property type="taxonomic scope" value="Bacteria"/>
</dbReference>
<dbReference type="HOGENOM" id="CLU_033861_0_0_7"/>
<dbReference type="OrthoDB" id="9807458at2"/>
<dbReference type="UniPathway" id="UPA00159">
    <property type="reaction ID" value="UER00275"/>
</dbReference>
<dbReference type="Proteomes" id="UP000002407">
    <property type="component" value="Chromosome"/>
</dbReference>
<dbReference type="GO" id="GO:0005829">
    <property type="term" value="C:cytosol"/>
    <property type="evidence" value="ECO:0007669"/>
    <property type="project" value="TreeGrafter"/>
</dbReference>
<dbReference type="GO" id="GO:0005524">
    <property type="term" value="F:ATP binding"/>
    <property type="evidence" value="ECO:0007669"/>
    <property type="project" value="UniProtKB-KW"/>
</dbReference>
<dbReference type="GO" id="GO:0033862">
    <property type="term" value="F:UMP kinase activity"/>
    <property type="evidence" value="ECO:0007669"/>
    <property type="project" value="UniProtKB-EC"/>
</dbReference>
<dbReference type="GO" id="GO:0044210">
    <property type="term" value="P:'de novo' CTP biosynthetic process"/>
    <property type="evidence" value="ECO:0007669"/>
    <property type="project" value="UniProtKB-UniRule"/>
</dbReference>
<dbReference type="GO" id="GO:0006225">
    <property type="term" value="P:UDP biosynthetic process"/>
    <property type="evidence" value="ECO:0007669"/>
    <property type="project" value="TreeGrafter"/>
</dbReference>
<dbReference type="CDD" id="cd04254">
    <property type="entry name" value="AAK_UMPK-PyrH-Ec"/>
    <property type="match status" value="1"/>
</dbReference>
<dbReference type="FunFam" id="3.40.1160.10:FF:000001">
    <property type="entry name" value="Uridylate kinase"/>
    <property type="match status" value="1"/>
</dbReference>
<dbReference type="Gene3D" id="3.40.1160.10">
    <property type="entry name" value="Acetylglutamate kinase-like"/>
    <property type="match status" value="1"/>
</dbReference>
<dbReference type="HAMAP" id="MF_01220_B">
    <property type="entry name" value="PyrH_B"/>
    <property type="match status" value="1"/>
</dbReference>
<dbReference type="InterPro" id="IPR036393">
    <property type="entry name" value="AceGlu_kinase-like_sf"/>
</dbReference>
<dbReference type="InterPro" id="IPR001048">
    <property type="entry name" value="Asp/Glu/Uridylate_kinase"/>
</dbReference>
<dbReference type="InterPro" id="IPR011817">
    <property type="entry name" value="Uridylate_kinase"/>
</dbReference>
<dbReference type="InterPro" id="IPR015963">
    <property type="entry name" value="Uridylate_kinase_bac"/>
</dbReference>
<dbReference type="NCBIfam" id="TIGR02075">
    <property type="entry name" value="pyrH_bact"/>
    <property type="match status" value="1"/>
</dbReference>
<dbReference type="PANTHER" id="PTHR42833">
    <property type="entry name" value="URIDYLATE KINASE"/>
    <property type="match status" value="1"/>
</dbReference>
<dbReference type="PANTHER" id="PTHR42833:SF4">
    <property type="entry name" value="URIDYLATE KINASE PUMPKIN, CHLOROPLASTIC"/>
    <property type="match status" value="1"/>
</dbReference>
<dbReference type="Pfam" id="PF00696">
    <property type="entry name" value="AA_kinase"/>
    <property type="match status" value="1"/>
</dbReference>
<dbReference type="PIRSF" id="PIRSF005650">
    <property type="entry name" value="Uridylate_kin"/>
    <property type="match status" value="1"/>
</dbReference>
<dbReference type="SUPFAM" id="SSF53633">
    <property type="entry name" value="Carbamate kinase-like"/>
    <property type="match status" value="1"/>
</dbReference>
<keyword id="KW-0021">Allosteric enzyme</keyword>
<keyword id="KW-0067">ATP-binding</keyword>
<keyword id="KW-0963">Cytoplasm</keyword>
<keyword id="KW-0418">Kinase</keyword>
<keyword id="KW-0547">Nucleotide-binding</keyword>
<keyword id="KW-0665">Pyrimidine biosynthesis</keyword>
<keyword id="KW-1185">Reference proteome</keyword>
<keyword id="KW-0808">Transferase</keyword>
<organism>
    <name type="scientific">Campylobacter hominis (strain ATCC BAA-381 / DSM 21671 / CCUG 45161 / LMG 19568 / NCTC 13146 / CH001A)</name>
    <dbReference type="NCBI Taxonomy" id="360107"/>
    <lineage>
        <taxon>Bacteria</taxon>
        <taxon>Pseudomonadati</taxon>
        <taxon>Campylobacterota</taxon>
        <taxon>Epsilonproteobacteria</taxon>
        <taxon>Campylobacterales</taxon>
        <taxon>Campylobacteraceae</taxon>
        <taxon>Campylobacter</taxon>
    </lineage>
</organism>